<protein>
    <recommendedName>
        <fullName evidence="1">UPF0335 protein RC0153</fullName>
    </recommendedName>
</protein>
<feature type="chain" id="PRO_0000219931" description="UPF0335 protein RC0153">
    <location>
        <begin position="1"/>
        <end position="78"/>
    </location>
</feature>
<name>Y153_RICCN</name>
<evidence type="ECO:0000255" key="1">
    <source>
        <dbReference type="HAMAP-Rule" id="MF_00797"/>
    </source>
</evidence>
<dbReference type="EMBL" id="AE006914">
    <property type="protein sequence ID" value="AAL02691.1"/>
    <property type="molecule type" value="Genomic_DNA"/>
</dbReference>
<dbReference type="PIR" id="A97719">
    <property type="entry name" value="A97719"/>
</dbReference>
<dbReference type="RefSeq" id="WP_004996682.1">
    <property type="nucleotide sequence ID" value="NC_003103.1"/>
</dbReference>
<dbReference type="SMR" id="Q92JB4"/>
<dbReference type="KEGG" id="rco:RC0153"/>
<dbReference type="HOGENOM" id="CLU_158651_4_0_5"/>
<dbReference type="Proteomes" id="UP000000816">
    <property type="component" value="Chromosome"/>
</dbReference>
<dbReference type="GO" id="GO:0003677">
    <property type="term" value="F:DNA binding"/>
    <property type="evidence" value="ECO:0007669"/>
    <property type="project" value="InterPro"/>
</dbReference>
<dbReference type="HAMAP" id="MF_00797">
    <property type="entry name" value="UPF0335"/>
    <property type="match status" value="1"/>
</dbReference>
<dbReference type="InterPro" id="IPR018753">
    <property type="entry name" value="GapR-like"/>
</dbReference>
<dbReference type="InterPro" id="IPR046367">
    <property type="entry name" value="GapR-like_DNA-bd"/>
</dbReference>
<dbReference type="NCBIfam" id="NF010247">
    <property type="entry name" value="PRK13694.1"/>
    <property type="match status" value="1"/>
</dbReference>
<dbReference type="Pfam" id="PF10073">
    <property type="entry name" value="GapR_DNA-bd"/>
    <property type="match status" value="1"/>
</dbReference>
<comment type="similarity">
    <text evidence="1">Belongs to the UPF0335 family.</text>
</comment>
<reference key="1">
    <citation type="journal article" date="2001" name="Science">
        <title>Mechanisms of evolution in Rickettsia conorii and R. prowazekii.</title>
        <authorList>
            <person name="Ogata H."/>
            <person name="Audic S."/>
            <person name="Renesto-Audiffren P."/>
            <person name="Fournier P.-E."/>
            <person name="Barbe V."/>
            <person name="Samson D."/>
            <person name="Roux V."/>
            <person name="Cossart P."/>
            <person name="Weissenbach J."/>
            <person name="Claverie J.-M."/>
            <person name="Raoult D."/>
        </authorList>
    </citation>
    <scope>NUCLEOTIDE SEQUENCE [LARGE SCALE GENOMIC DNA]</scope>
    <source>
        <strain>ATCC VR-613 / Malish 7</strain>
    </source>
</reference>
<organism>
    <name type="scientific">Rickettsia conorii (strain ATCC VR-613 / Malish 7)</name>
    <dbReference type="NCBI Taxonomy" id="272944"/>
    <lineage>
        <taxon>Bacteria</taxon>
        <taxon>Pseudomonadati</taxon>
        <taxon>Pseudomonadota</taxon>
        <taxon>Alphaproteobacteria</taxon>
        <taxon>Rickettsiales</taxon>
        <taxon>Rickettsiaceae</taxon>
        <taxon>Rickettsieae</taxon>
        <taxon>Rickettsia</taxon>
        <taxon>spotted fever group</taxon>
    </lineage>
</organism>
<sequence>MSEVVVKEQLEQYISKIERLEQEKADLSQEVKDIFQDASSHGFDVKAMKSILKLKKLDKDKLAEQDAMLELYRDTLGI</sequence>
<accession>Q92JB4</accession>
<proteinExistence type="inferred from homology"/>
<gene>
    <name type="ordered locus">RC0153</name>
</gene>